<gene>
    <name evidence="1" type="primary">gpt</name>
    <name type="ordered locus">RL1948</name>
</gene>
<name>XGPT_RHIJ3</name>
<accession>Q1MHW9</accession>
<dbReference type="EC" id="2.4.2.-" evidence="1"/>
<dbReference type="EC" id="2.4.2.22" evidence="1"/>
<dbReference type="EMBL" id="AM236080">
    <property type="protein sequence ID" value="CAK07441.1"/>
    <property type="molecule type" value="Genomic_DNA"/>
</dbReference>
<dbReference type="RefSeq" id="WP_011651569.1">
    <property type="nucleotide sequence ID" value="NC_008380.1"/>
</dbReference>
<dbReference type="SMR" id="Q1MHW9"/>
<dbReference type="EnsemblBacteria" id="CAK07441">
    <property type="protein sequence ID" value="CAK07441"/>
    <property type="gene ID" value="RL1948"/>
</dbReference>
<dbReference type="GeneID" id="67485893"/>
<dbReference type="KEGG" id="rle:RL1948"/>
<dbReference type="eggNOG" id="COG2236">
    <property type="taxonomic scope" value="Bacteria"/>
</dbReference>
<dbReference type="HOGENOM" id="CLU_080904_3_0_5"/>
<dbReference type="UniPathway" id="UPA00602">
    <property type="reaction ID" value="UER00658"/>
</dbReference>
<dbReference type="UniPathway" id="UPA00909">
    <property type="reaction ID" value="UER00887"/>
</dbReference>
<dbReference type="Proteomes" id="UP000006575">
    <property type="component" value="Chromosome"/>
</dbReference>
<dbReference type="GO" id="GO:0005886">
    <property type="term" value="C:plasma membrane"/>
    <property type="evidence" value="ECO:0007669"/>
    <property type="project" value="UniProtKB-SubCell"/>
</dbReference>
<dbReference type="GO" id="GO:0052657">
    <property type="term" value="F:guanine phosphoribosyltransferase activity"/>
    <property type="evidence" value="ECO:0007669"/>
    <property type="project" value="RHEA"/>
</dbReference>
<dbReference type="GO" id="GO:0004422">
    <property type="term" value="F:hypoxanthine phosphoribosyltransferase activity"/>
    <property type="evidence" value="ECO:0007669"/>
    <property type="project" value="RHEA"/>
</dbReference>
<dbReference type="GO" id="GO:0000287">
    <property type="term" value="F:magnesium ion binding"/>
    <property type="evidence" value="ECO:0007669"/>
    <property type="project" value="UniProtKB-UniRule"/>
</dbReference>
<dbReference type="GO" id="GO:0000310">
    <property type="term" value="F:xanthine phosphoribosyltransferase activity"/>
    <property type="evidence" value="ECO:0007669"/>
    <property type="project" value="UniProtKB-UniRule"/>
</dbReference>
<dbReference type="GO" id="GO:0032263">
    <property type="term" value="P:GMP salvage"/>
    <property type="evidence" value="ECO:0007669"/>
    <property type="project" value="UniProtKB-UniRule"/>
</dbReference>
<dbReference type="GO" id="GO:0006166">
    <property type="term" value="P:purine ribonucleoside salvage"/>
    <property type="evidence" value="ECO:0007669"/>
    <property type="project" value="UniProtKB-KW"/>
</dbReference>
<dbReference type="GO" id="GO:0032265">
    <property type="term" value="P:XMP salvage"/>
    <property type="evidence" value="ECO:0007669"/>
    <property type="project" value="UniProtKB-UniRule"/>
</dbReference>
<dbReference type="CDD" id="cd06223">
    <property type="entry name" value="PRTases_typeI"/>
    <property type="match status" value="1"/>
</dbReference>
<dbReference type="Gene3D" id="3.40.50.2020">
    <property type="match status" value="1"/>
</dbReference>
<dbReference type="HAMAP" id="MF_01903">
    <property type="entry name" value="XGPRT"/>
    <property type="match status" value="1"/>
</dbReference>
<dbReference type="InterPro" id="IPR000836">
    <property type="entry name" value="PRibTrfase_dom"/>
</dbReference>
<dbReference type="InterPro" id="IPR029057">
    <property type="entry name" value="PRTase-like"/>
</dbReference>
<dbReference type="InterPro" id="IPR023747">
    <property type="entry name" value="Xanthine_Guanine_PRibTrfase"/>
</dbReference>
<dbReference type="NCBIfam" id="NF006613">
    <property type="entry name" value="PRK09177.1"/>
    <property type="match status" value="1"/>
</dbReference>
<dbReference type="PANTHER" id="PTHR39563">
    <property type="entry name" value="XANTHINE PHOSPHORIBOSYLTRANSFERASE"/>
    <property type="match status" value="1"/>
</dbReference>
<dbReference type="PANTHER" id="PTHR39563:SF1">
    <property type="entry name" value="XANTHINE-GUANINE PHOSPHORIBOSYLTRANSFERASE"/>
    <property type="match status" value="1"/>
</dbReference>
<dbReference type="Pfam" id="PF00156">
    <property type="entry name" value="Pribosyltran"/>
    <property type="match status" value="1"/>
</dbReference>
<dbReference type="SUPFAM" id="SSF53271">
    <property type="entry name" value="PRTase-like"/>
    <property type="match status" value="1"/>
</dbReference>
<comment type="function">
    <text evidence="1">Purine salvage pathway enzyme that catalyzes the transfer of the ribosyl-5-phosphate group from 5-phospho-alpha-D-ribose 1-diphosphate (PRPP) to the N9 position of the 6-oxopurines guanine and xanthine to form the corresponding ribonucleotides GMP (guanosine 5'-monophosphate) and XMP (xanthosine 5'-monophosphate), with the release of PPi. To a lesser extent, also acts on hypoxanthine.</text>
</comment>
<comment type="catalytic activity">
    <reaction evidence="1">
        <text>GMP + diphosphate = guanine + 5-phospho-alpha-D-ribose 1-diphosphate</text>
        <dbReference type="Rhea" id="RHEA:25424"/>
        <dbReference type="ChEBI" id="CHEBI:16235"/>
        <dbReference type="ChEBI" id="CHEBI:33019"/>
        <dbReference type="ChEBI" id="CHEBI:58017"/>
        <dbReference type="ChEBI" id="CHEBI:58115"/>
    </reaction>
    <physiologicalReaction direction="right-to-left" evidence="1">
        <dbReference type="Rhea" id="RHEA:25426"/>
    </physiologicalReaction>
</comment>
<comment type="catalytic activity">
    <reaction evidence="1">
        <text>XMP + diphosphate = xanthine + 5-phospho-alpha-D-ribose 1-diphosphate</text>
        <dbReference type="Rhea" id="RHEA:10800"/>
        <dbReference type="ChEBI" id="CHEBI:17712"/>
        <dbReference type="ChEBI" id="CHEBI:33019"/>
        <dbReference type="ChEBI" id="CHEBI:57464"/>
        <dbReference type="ChEBI" id="CHEBI:58017"/>
        <dbReference type="EC" id="2.4.2.22"/>
    </reaction>
    <physiologicalReaction direction="right-to-left" evidence="1">
        <dbReference type="Rhea" id="RHEA:10802"/>
    </physiologicalReaction>
</comment>
<comment type="catalytic activity">
    <reaction evidence="1">
        <text>IMP + diphosphate = hypoxanthine + 5-phospho-alpha-D-ribose 1-diphosphate</text>
        <dbReference type="Rhea" id="RHEA:17973"/>
        <dbReference type="ChEBI" id="CHEBI:17368"/>
        <dbReference type="ChEBI" id="CHEBI:33019"/>
        <dbReference type="ChEBI" id="CHEBI:58017"/>
        <dbReference type="ChEBI" id="CHEBI:58053"/>
    </reaction>
    <physiologicalReaction direction="right-to-left" evidence="1">
        <dbReference type="Rhea" id="RHEA:17975"/>
    </physiologicalReaction>
</comment>
<comment type="cofactor">
    <cofactor evidence="1">
        <name>Mg(2+)</name>
        <dbReference type="ChEBI" id="CHEBI:18420"/>
    </cofactor>
</comment>
<comment type="pathway">
    <text evidence="1">Purine metabolism; GMP biosynthesis via salvage pathway; GMP from guanine: step 1/1.</text>
</comment>
<comment type="pathway">
    <text evidence="1">Purine metabolism; XMP biosynthesis via salvage pathway; XMP from xanthine: step 1/1.</text>
</comment>
<comment type="subunit">
    <text evidence="1">Homotetramer.</text>
</comment>
<comment type="subcellular location">
    <subcellularLocation>
        <location evidence="1">Cell inner membrane</location>
        <topology evidence="1">Peripheral membrane protein</topology>
    </subcellularLocation>
</comment>
<comment type="similarity">
    <text evidence="1">Belongs to the purine/pyrimidine phosphoribosyltransferase family. XGPT subfamily.</text>
</comment>
<reference key="1">
    <citation type="journal article" date="2006" name="Genome Biol.">
        <title>The genome of Rhizobium leguminosarum has recognizable core and accessory components.</title>
        <authorList>
            <person name="Young J.P.W."/>
            <person name="Crossman L.C."/>
            <person name="Johnston A.W.B."/>
            <person name="Thomson N.R."/>
            <person name="Ghazoui Z.F."/>
            <person name="Hull K.H."/>
            <person name="Wexler M."/>
            <person name="Curson A.R.J."/>
            <person name="Todd J.D."/>
            <person name="Poole P.S."/>
            <person name="Mauchline T.H."/>
            <person name="East A.K."/>
            <person name="Quail M.A."/>
            <person name="Churcher C."/>
            <person name="Arrowsmith C."/>
            <person name="Cherevach I."/>
            <person name="Chillingworth T."/>
            <person name="Clarke K."/>
            <person name="Cronin A."/>
            <person name="Davis P."/>
            <person name="Fraser A."/>
            <person name="Hance Z."/>
            <person name="Hauser H."/>
            <person name="Jagels K."/>
            <person name="Moule S."/>
            <person name="Mungall K."/>
            <person name="Norbertczak H."/>
            <person name="Rabbinowitsch E."/>
            <person name="Sanders M."/>
            <person name="Simmonds M."/>
            <person name="Whitehead S."/>
            <person name="Parkhill J."/>
        </authorList>
    </citation>
    <scope>NUCLEOTIDE SEQUENCE [LARGE SCALE GENOMIC DNA]</scope>
    <source>
        <strain>DSM 114642 / LMG 32736 / 3841</strain>
    </source>
</reference>
<organism>
    <name type="scientific">Rhizobium johnstonii (strain DSM 114642 / LMG 32736 / 3841)</name>
    <name type="common">Rhizobium leguminosarum bv. viciae</name>
    <dbReference type="NCBI Taxonomy" id="216596"/>
    <lineage>
        <taxon>Bacteria</taxon>
        <taxon>Pseudomonadati</taxon>
        <taxon>Pseudomonadota</taxon>
        <taxon>Alphaproteobacteria</taxon>
        <taxon>Hyphomicrobiales</taxon>
        <taxon>Rhizobiaceae</taxon>
        <taxon>Rhizobium/Agrobacterium group</taxon>
        <taxon>Rhizobium</taxon>
        <taxon>Rhizobium johnstonii</taxon>
    </lineage>
</organism>
<proteinExistence type="inferred from homology"/>
<protein>
    <recommendedName>
        <fullName evidence="1">Xanthine-guanine phosphoribosyltransferase</fullName>
        <shortName evidence="1">XGPRT</shortName>
        <ecNumber evidence="1">2.4.2.-</ecNumber>
        <ecNumber evidence="1">2.4.2.22</ecNumber>
    </recommendedName>
    <alternativeName>
        <fullName evidence="1">Xanthine phosphoribosyltransferase</fullName>
    </alternativeName>
</protein>
<sequence>MSLPDKAFPVSWDQFHRDARALAWRLAGLNQTFKAIVCITRGGLVPAAIISRELNIRLIETVCVASYHDYVNQGDMVLLKGIAPELMENGGETVLVVDDLTDTGKTAAQVRTMLPRAHFACVYAKPKGVPTVDTFITEVSQDTWIYFPWDMGFTYQEPIAKGAG</sequence>
<keyword id="KW-0997">Cell inner membrane</keyword>
<keyword id="KW-1003">Cell membrane</keyword>
<keyword id="KW-0328">Glycosyltransferase</keyword>
<keyword id="KW-0460">Magnesium</keyword>
<keyword id="KW-0472">Membrane</keyword>
<keyword id="KW-0479">Metal-binding</keyword>
<keyword id="KW-0660">Purine salvage</keyword>
<keyword id="KW-0808">Transferase</keyword>
<evidence type="ECO:0000255" key="1">
    <source>
        <dbReference type="HAMAP-Rule" id="MF_01903"/>
    </source>
</evidence>
<feature type="chain" id="PRO_0000261013" description="Xanthine-guanine phosphoribosyltransferase">
    <location>
        <begin position="1"/>
        <end position="164"/>
    </location>
</feature>
<feature type="binding site" evidence="1">
    <location>
        <begin position="41"/>
        <end position="42"/>
    </location>
    <ligand>
        <name>5-phospho-alpha-D-ribose 1-diphosphate</name>
        <dbReference type="ChEBI" id="CHEBI:58017"/>
    </ligand>
</feature>
<feature type="binding site" evidence="1">
    <location>
        <begin position="98"/>
        <end position="106"/>
    </location>
    <ligand>
        <name>5-phospho-alpha-D-ribose 1-diphosphate</name>
        <dbReference type="ChEBI" id="CHEBI:58017"/>
    </ligand>
</feature>
<feature type="binding site" evidence="1">
    <location>
        <position position="99"/>
    </location>
    <ligand>
        <name>Mg(2+)</name>
        <dbReference type="ChEBI" id="CHEBI:18420"/>
    </ligand>
</feature>
<feature type="binding site" evidence="1">
    <location>
        <begin position="102"/>
        <end position="106"/>
    </location>
    <ligand>
        <name>GMP</name>
        <dbReference type="ChEBI" id="CHEBI:58115"/>
    </ligand>
</feature>
<feature type="binding site" evidence="1">
    <location>
        <position position="102"/>
    </location>
    <ligand>
        <name>guanine</name>
        <dbReference type="ChEBI" id="CHEBI:16235"/>
    </ligand>
</feature>
<feature type="binding site" evidence="1">
    <location>
        <position position="102"/>
    </location>
    <ligand>
        <name>xanthine</name>
        <dbReference type="ChEBI" id="CHEBI:17712"/>
    </ligand>
</feature>
<feature type="binding site" evidence="1">
    <location>
        <begin position="144"/>
        <end position="145"/>
    </location>
    <ligand>
        <name>GMP</name>
        <dbReference type="ChEBI" id="CHEBI:58115"/>
    </ligand>
</feature>
<feature type="binding site" evidence="1">
    <location>
        <position position="145"/>
    </location>
    <ligand>
        <name>guanine</name>
        <dbReference type="ChEBI" id="CHEBI:16235"/>
    </ligand>
</feature>
<feature type="binding site" evidence="1">
    <location>
        <position position="145"/>
    </location>
    <ligand>
        <name>xanthine</name>
        <dbReference type="ChEBI" id="CHEBI:17712"/>
    </ligand>
</feature>